<sequence length="503" mass="55663">MAELLASLPAWAAVLLLFFATVSGSTGPRSRENRGASRIPSQFSEEERVAIKEALKGAIQIPTVSFSHEESNTTALAEFGEYIRKAFPTVFHSSLVQHEVVAKYSHLFTIQGSDPSLQPYMLMAHIDVVPAPEEGWEVPPFSGLERNGFIYGRGALDNKNSVMAILHALELLLIRNYSPKRSFFIALGHDEEVSGEKGAQKISALLQARGVQLAFLVDEGSFILEGFIPNLEKPVAMISVTEKGALDLMLQVNMTPGHSSAPPKETSIGILSAAVSRLEQTPMPNMFGGGPLKKTMKLLANEFSFPINIVLRNLWLFHPIVSRIMERNPITNALVRTTTALTMFNAGIKVNVIPPLAQATINCRIHPSQTVHEVLELVKNTVADDRVQLHVLRSFEPLPISPSDDQAMGYQLLQETIRSVFPEVDIVVPGICIANTDTRHYANITNGMYRFNPLPLNPQDFSGVHGINEKVSVQNYQNQVKFIFEFIQNADTYKEPVPHLHEL</sequence>
<protein>
    <recommendedName>
        <fullName evidence="12">N-fatty-acyl-amino acid synthase/hydrolase PM20D1</fullName>
        <ecNumber evidence="3 4 5 7 8">3.5.1.114</ecNumber>
        <ecNumber evidence="3 5 7 8">3.5.1.14</ecNumber>
    </recommendedName>
    <alternativeName>
        <fullName evidence="9 10 14">Peptidase M20 domain-containing protein 1</fullName>
        <shortName evidence="10">PM20D1</shortName>
    </alternativeName>
</protein>
<evidence type="ECO:0000250" key="1"/>
<evidence type="ECO:0000255" key="2"/>
<evidence type="ECO:0000269" key="3">
    <source>
    </source>
</evidence>
<evidence type="ECO:0000269" key="4">
    <source>
    </source>
</evidence>
<evidence type="ECO:0000269" key="5">
    <source>
    </source>
</evidence>
<evidence type="ECO:0000269" key="6">
    <source>
    </source>
</evidence>
<evidence type="ECO:0000269" key="7">
    <source>
    </source>
</evidence>
<evidence type="ECO:0000269" key="8">
    <source>
    </source>
</evidence>
<evidence type="ECO:0000303" key="9">
    <source>
    </source>
</evidence>
<evidence type="ECO:0000303" key="10">
    <source>
    </source>
</evidence>
<evidence type="ECO:0000305" key="11"/>
<evidence type="ECO:0000305" key="12">
    <source>
    </source>
</evidence>
<evidence type="ECO:0000305" key="13">
    <source>
    </source>
</evidence>
<evidence type="ECO:0000312" key="14">
    <source>
        <dbReference type="MGI" id="MGI:2442939"/>
    </source>
</evidence>
<name>P20D1_MOUSE</name>
<reference key="1">
    <citation type="journal article" date="2005" name="Science">
        <title>The transcriptional landscape of the mammalian genome.</title>
        <authorList>
            <person name="Carninci P."/>
            <person name="Kasukawa T."/>
            <person name="Katayama S."/>
            <person name="Gough J."/>
            <person name="Frith M.C."/>
            <person name="Maeda N."/>
            <person name="Oyama R."/>
            <person name="Ravasi T."/>
            <person name="Lenhard B."/>
            <person name="Wells C."/>
            <person name="Kodzius R."/>
            <person name="Shimokawa K."/>
            <person name="Bajic V.B."/>
            <person name="Brenner S.E."/>
            <person name="Batalov S."/>
            <person name="Forrest A.R."/>
            <person name="Zavolan M."/>
            <person name="Davis M.J."/>
            <person name="Wilming L.G."/>
            <person name="Aidinis V."/>
            <person name="Allen J.E."/>
            <person name="Ambesi-Impiombato A."/>
            <person name="Apweiler R."/>
            <person name="Aturaliya R.N."/>
            <person name="Bailey T.L."/>
            <person name="Bansal M."/>
            <person name="Baxter L."/>
            <person name="Beisel K.W."/>
            <person name="Bersano T."/>
            <person name="Bono H."/>
            <person name="Chalk A.M."/>
            <person name="Chiu K.P."/>
            <person name="Choudhary V."/>
            <person name="Christoffels A."/>
            <person name="Clutterbuck D.R."/>
            <person name="Crowe M.L."/>
            <person name="Dalla E."/>
            <person name="Dalrymple B.P."/>
            <person name="de Bono B."/>
            <person name="Della Gatta G."/>
            <person name="di Bernardo D."/>
            <person name="Down T."/>
            <person name="Engstrom P."/>
            <person name="Fagiolini M."/>
            <person name="Faulkner G."/>
            <person name="Fletcher C.F."/>
            <person name="Fukushima T."/>
            <person name="Furuno M."/>
            <person name="Futaki S."/>
            <person name="Gariboldi M."/>
            <person name="Georgii-Hemming P."/>
            <person name="Gingeras T.R."/>
            <person name="Gojobori T."/>
            <person name="Green R.E."/>
            <person name="Gustincich S."/>
            <person name="Harbers M."/>
            <person name="Hayashi Y."/>
            <person name="Hensch T.K."/>
            <person name="Hirokawa N."/>
            <person name="Hill D."/>
            <person name="Huminiecki L."/>
            <person name="Iacono M."/>
            <person name="Ikeo K."/>
            <person name="Iwama A."/>
            <person name="Ishikawa T."/>
            <person name="Jakt M."/>
            <person name="Kanapin A."/>
            <person name="Katoh M."/>
            <person name="Kawasawa Y."/>
            <person name="Kelso J."/>
            <person name="Kitamura H."/>
            <person name="Kitano H."/>
            <person name="Kollias G."/>
            <person name="Krishnan S.P."/>
            <person name="Kruger A."/>
            <person name="Kummerfeld S.K."/>
            <person name="Kurochkin I.V."/>
            <person name="Lareau L.F."/>
            <person name="Lazarevic D."/>
            <person name="Lipovich L."/>
            <person name="Liu J."/>
            <person name="Liuni S."/>
            <person name="McWilliam S."/>
            <person name="Madan Babu M."/>
            <person name="Madera M."/>
            <person name="Marchionni L."/>
            <person name="Matsuda H."/>
            <person name="Matsuzawa S."/>
            <person name="Miki H."/>
            <person name="Mignone F."/>
            <person name="Miyake S."/>
            <person name="Morris K."/>
            <person name="Mottagui-Tabar S."/>
            <person name="Mulder N."/>
            <person name="Nakano N."/>
            <person name="Nakauchi H."/>
            <person name="Ng P."/>
            <person name="Nilsson R."/>
            <person name="Nishiguchi S."/>
            <person name="Nishikawa S."/>
            <person name="Nori F."/>
            <person name="Ohara O."/>
            <person name="Okazaki Y."/>
            <person name="Orlando V."/>
            <person name="Pang K.C."/>
            <person name="Pavan W.J."/>
            <person name="Pavesi G."/>
            <person name="Pesole G."/>
            <person name="Petrovsky N."/>
            <person name="Piazza S."/>
            <person name="Reed J."/>
            <person name="Reid J.F."/>
            <person name="Ring B.Z."/>
            <person name="Ringwald M."/>
            <person name="Rost B."/>
            <person name="Ruan Y."/>
            <person name="Salzberg S.L."/>
            <person name="Sandelin A."/>
            <person name="Schneider C."/>
            <person name="Schoenbach C."/>
            <person name="Sekiguchi K."/>
            <person name="Semple C.A."/>
            <person name="Seno S."/>
            <person name="Sessa L."/>
            <person name="Sheng Y."/>
            <person name="Shibata Y."/>
            <person name="Shimada H."/>
            <person name="Shimada K."/>
            <person name="Silva D."/>
            <person name="Sinclair B."/>
            <person name="Sperling S."/>
            <person name="Stupka E."/>
            <person name="Sugiura K."/>
            <person name="Sultana R."/>
            <person name="Takenaka Y."/>
            <person name="Taki K."/>
            <person name="Tammoja K."/>
            <person name="Tan S.L."/>
            <person name="Tang S."/>
            <person name="Taylor M.S."/>
            <person name="Tegner J."/>
            <person name="Teichmann S.A."/>
            <person name="Ueda H.R."/>
            <person name="van Nimwegen E."/>
            <person name="Verardo R."/>
            <person name="Wei C.L."/>
            <person name="Yagi K."/>
            <person name="Yamanishi H."/>
            <person name="Zabarovsky E."/>
            <person name="Zhu S."/>
            <person name="Zimmer A."/>
            <person name="Hide W."/>
            <person name="Bult C."/>
            <person name="Grimmond S.M."/>
            <person name="Teasdale R.D."/>
            <person name="Liu E.T."/>
            <person name="Brusic V."/>
            <person name="Quackenbush J."/>
            <person name="Wahlestedt C."/>
            <person name="Mattick J.S."/>
            <person name="Hume D.A."/>
            <person name="Kai C."/>
            <person name="Sasaki D."/>
            <person name="Tomaru Y."/>
            <person name="Fukuda S."/>
            <person name="Kanamori-Katayama M."/>
            <person name="Suzuki M."/>
            <person name="Aoki J."/>
            <person name="Arakawa T."/>
            <person name="Iida J."/>
            <person name="Imamura K."/>
            <person name="Itoh M."/>
            <person name="Kato T."/>
            <person name="Kawaji H."/>
            <person name="Kawagashira N."/>
            <person name="Kawashima T."/>
            <person name="Kojima M."/>
            <person name="Kondo S."/>
            <person name="Konno H."/>
            <person name="Nakano K."/>
            <person name="Ninomiya N."/>
            <person name="Nishio T."/>
            <person name="Okada M."/>
            <person name="Plessy C."/>
            <person name="Shibata K."/>
            <person name="Shiraki T."/>
            <person name="Suzuki S."/>
            <person name="Tagami M."/>
            <person name="Waki K."/>
            <person name="Watahiki A."/>
            <person name="Okamura-Oho Y."/>
            <person name="Suzuki H."/>
            <person name="Kawai J."/>
            <person name="Hayashizaki Y."/>
        </authorList>
    </citation>
    <scope>NUCLEOTIDE SEQUENCE [LARGE SCALE MRNA]</scope>
    <source>
        <strain>C57BL/6J</strain>
        <tissue>Kidney</tissue>
        <tissue>Skin</tissue>
    </source>
</reference>
<reference key="2">
    <citation type="journal article" date="2004" name="Genome Res.">
        <title>The status, quality, and expansion of the NIH full-length cDNA project: the Mammalian Gene Collection (MGC).</title>
        <authorList>
            <consortium name="The MGC Project Team"/>
        </authorList>
    </citation>
    <scope>NUCLEOTIDE SEQUENCE [LARGE SCALE MRNA]</scope>
    <source>
        <tissue>Brain</tissue>
    </source>
</reference>
<reference key="3">
    <citation type="journal article" date="2010" name="Cell">
        <title>A tissue-specific atlas of mouse protein phosphorylation and expression.</title>
        <authorList>
            <person name="Huttlin E.L."/>
            <person name="Jedrychowski M.P."/>
            <person name="Elias J.E."/>
            <person name="Goswami T."/>
            <person name="Rad R."/>
            <person name="Beausoleil S.A."/>
            <person name="Villen J."/>
            <person name="Haas W."/>
            <person name="Sowa M.E."/>
            <person name="Gygi S.P."/>
        </authorList>
    </citation>
    <scope>IDENTIFICATION BY MASS SPECTROMETRY [LARGE SCALE ANALYSIS]</scope>
    <source>
        <tissue>Brown adipose tissue</tissue>
        <tissue>Kidney</tissue>
        <tissue>Liver</tissue>
        <tissue>Lung</tissue>
        <tissue>Pancreas</tissue>
        <tissue>Testis</tissue>
    </source>
</reference>
<reference key="4">
    <citation type="journal article" date="2016" name="Cell">
        <title>The secreted enzyme PM20D1 regulates lipidated amino acid uncouplers of mitochondria.</title>
        <authorList>
            <person name="Long J.Z."/>
            <person name="Svensson K.J."/>
            <person name="Bateman L.A."/>
            <person name="Lin H."/>
            <person name="Kamenecka T."/>
            <person name="Lokurkar I.A."/>
            <person name="Lou J."/>
            <person name="Rao R.R."/>
            <person name="Chang M.R."/>
            <person name="Jedrychowski M.P."/>
            <person name="Paulo J.A."/>
            <person name="Gygi S.P."/>
            <person name="Griffin P.R."/>
            <person name="Nomura D.K."/>
            <person name="Spiegelman B.M."/>
        </authorList>
    </citation>
    <scope>FUNCTION</scope>
    <scope>CATALYTIC ACTIVITY</scope>
    <scope>PATHWAY</scope>
    <scope>SUBCELLULAR LOCATION</scope>
    <scope>TISSUE SPECIFICITY</scope>
    <scope>INDUCTION</scope>
    <scope>MUTAGENESIS OF HIS-125; ASP-127 AND HIS-465</scope>
</reference>
<reference key="5">
    <citation type="journal article" date="2018" name="J. Med. Chem.">
        <title>Discovery of Hydrolysis-Resistant Isoindoline N-Acyl Amino Acid Analogues that Stimulate Mitochondrial Respiration.</title>
        <authorList>
            <person name="Lin H."/>
            <person name="Long J.Z."/>
            <person name="Roche A.M."/>
            <person name="Svensson K.J."/>
            <person name="Dou F.Y."/>
            <person name="Chang M.R."/>
            <person name="Strutzenberg T."/>
            <person name="Ruiz C."/>
            <person name="Cameron M.D."/>
            <person name="Novick S.J."/>
            <person name="Berdan C.A."/>
            <person name="Louie S.M."/>
            <person name="Nomura D.K."/>
            <person name="Spiegelman B.M."/>
            <person name="Griffin P.R."/>
            <person name="Kamenecka T.M."/>
        </authorList>
    </citation>
    <scope>FUNCTION</scope>
    <scope>CATALYTIC ACTIVITY</scope>
</reference>
<reference key="6">
    <citation type="journal article" date="2018" name="Proc. Natl. Acad. Sci. U.S.A.">
        <title>Ablation of PM20D1 reveals N-acyl amino acid control of metabolism and nociception.</title>
        <authorList>
            <person name="Long J.Z."/>
            <person name="Roche A.M."/>
            <person name="Berdan C.A."/>
            <person name="Louie S.M."/>
            <person name="Roberts A.J."/>
            <person name="Svensson K.J."/>
            <person name="Dou F.Y."/>
            <person name="Bateman L.A."/>
            <person name="Mina A.I."/>
            <person name="Deng Z."/>
            <person name="Jedrychowski M.P."/>
            <person name="Lin H."/>
            <person name="Kamenecka T.M."/>
            <person name="Asara J.M."/>
            <person name="Griffin P.R."/>
            <person name="Banks A.S."/>
            <person name="Nomura D.K."/>
            <person name="Spiegelman B.M."/>
        </authorList>
    </citation>
    <scope>FUNCTION</scope>
    <scope>CATALYTIC ACTIVITY</scope>
    <scope>PATHWAY</scope>
    <scope>TISSUE SPECIFICITY</scope>
    <scope>DISRUPTION PHENOTYPE</scope>
</reference>
<reference key="7">
    <citation type="journal article" date="2019" name="Proc. Natl. Acad. Sci. U.S.A.">
        <title>Natural human genetic variation determines basal and inducible expression of PM20D1, an obesity-associated gene.</title>
        <authorList>
            <person name="Benson K.K."/>
            <person name="Hu W."/>
            <person name="Weller A.H."/>
            <person name="Bennett A.H."/>
            <person name="Chen E.R."/>
            <person name="Khetarpal S.A."/>
            <person name="Yoshino S."/>
            <person name="Bone W.P."/>
            <person name="Wang L."/>
            <person name="Rabinowitz J.D."/>
            <person name="Voight B.F."/>
            <person name="Soccio R.E."/>
        </authorList>
    </citation>
    <scope>FUNCTION</scope>
    <scope>INDUCTION</scope>
</reference>
<reference key="8">
    <citation type="journal article" date="2020" name="Elife">
        <title>Cooperative enzymatic control of N-acyl amino acids by PM20D1 and FAAH.</title>
        <authorList>
            <person name="Kim J.T."/>
            <person name="Terrell S.M."/>
            <person name="Li V.L."/>
            <person name="Wei W."/>
            <person name="Fischer C.R."/>
            <person name="Long J.Z."/>
        </authorList>
    </citation>
    <scope>FUNCTION</scope>
    <scope>CATALYTIC ACTIVITY</scope>
    <scope>PATHWAY</scope>
    <scope>SUBCELLULAR LOCATION</scope>
    <scope>DISRUPTION PHENOTYPE</scope>
</reference>
<reference key="9">
    <citation type="journal article" date="2020" name="Cell Chem. Biol.">
        <title>A Plasma Protein Network Regulates PM20D1 and N-Acyl Amino Acid Bioactivity.</title>
        <authorList>
            <person name="Kim J.T."/>
            <person name="Jedrychowski M.P."/>
            <person name="Wei W."/>
            <person name="Fernandez D."/>
            <person name="Fischer C.R."/>
            <person name="Banik S.M."/>
            <person name="Spiegelman B.M."/>
            <person name="Long J.Z."/>
        </authorList>
    </citation>
    <scope>FUNCTION</scope>
    <scope>CATALYTIC ACTIVITY</scope>
    <scope>ACTIVITY REGULATION</scope>
    <scope>PATHWAY</scope>
    <scope>SUBCELLULAR LOCATION</scope>
</reference>
<keyword id="KW-0325">Glycoprotein</keyword>
<keyword id="KW-0378">Hydrolase</keyword>
<keyword id="KW-0443">Lipid metabolism</keyword>
<keyword id="KW-0456">Lyase</keyword>
<keyword id="KW-0479">Metal-binding</keyword>
<keyword id="KW-0645">Protease</keyword>
<keyword id="KW-1185">Reference proteome</keyword>
<keyword id="KW-0964">Secreted</keyword>
<keyword id="KW-0732">Signal</keyword>
<keyword id="KW-0862">Zinc</keyword>
<dbReference type="EC" id="3.5.1.114" evidence="3 4 5 7 8"/>
<dbReference type="EC" id="3.5.1.14" evidence="3 5 7 8"/>
<dbReference type="EMBL" id="AK028883">
    <property type="protein sequence ID" value="BAC26171.1"/>
    <property type="molecule type" value="mRNA"/>
</dbReference>
<dbReference type="EMBL" id="AK143953">
    <property type="protein sequence ID" value="BAE25627.1"/>
    <property type="molecule type" value="mRNA"/>
</dbReference>
<dbReference type="EMBL" id="BC025830">
    <property type="protein sequence ID" value="AAH25830.1"/>
    <property type="molecule type" value="mRNA"/>
</dbReference>
<dbReference type="EMBL" id="BC120725">
    <property type="protein sequence ID" value="AAI20726.1"/>
    <property type="molecule type" value="mRNA"/>
</dbReference>
<dbReference type="EMBL" id="BC125395">
    <property type="protein sequence ID" value="AAI25396.1"/>
    <property type="molecule type" value="mRNA"/>
</dbReference>
<dbReference type="CCDS" id="CCDS15274.1"/>
<dbReference type="RefSeq" id="NP_001344407.1">
    <property type="nucleotide sequence ID" value="NM_001357478.1"/>
</dbReference>
<dbReference type="RefSeq" id="NP_835180.2">
    <property type="nucleotide sequence ID" value="NM_178079.3"/>
</dbReference>
<dbReference type="RefSeq" id="XP_006529401.1">
    <property type="nucleotide sequence ID" value="XM_006529338.3"/>
</dbReference>
<dbReference type="SMR" id="Q8C165"/>
<dbReference type="FunCoup" id="Q8C165">
    <property type="interactions" value="44"/>
</dbReference>
<dbReference type="IntAct" id="Q8C165">
    <property type="interactions" value="1"/>
</dbReference>
<dbReference type="STRING" id="10090.ENSMUSP00000108012"/>
<dbReference type="ChEMBL" id="CHEMBL4295889"/>
<dbReference type="SwissLipids" id="SLP:000001659"/>
<dbReference type="MEROPS" id="M20.011"/>
<dbReference type="CarbonylDB" id="Q8C165"/>
<dbReference type="GlyConnect" id="2603">
    <property type="glycosylation" value="2 N-Linked glycans (2 sites)"/>
</dbReference>
<dbReference type="GlyCosmos" id="Q8C165">
    <property type="glycosylation" value="2 sites, 2 glycans"/>
</dbReference>
<dbReference type="GlyGen" id="Q8C165">
    <property type="glycosylation" value="3 sites, 3 N-linked glycans (3 sites)"/>
</dbReference>
<dbReference type="iPTMnet" id="Q8C165"/>
<dbReference type="PhosphoSitePlus" id="Q8C165"/>
<dbReference type="SwissPalm" id="Q8C165"/>
<dbReference type="CPTAC" id="non-CPTAC-3475"/>
<dbReference type="jPOST" id="Q8C165"/>
<dbReference type="PaxDb" id="10090-ENSMUSP00000108012"/>
<dbReference type="PeptideAtlas" id="Q8C165"/>
<dbReference type="ProteomicsDB" id="294087"/>
<dbReference type="Antibodypedia" id="2556">
    <property type="antibodies" value="26 antibodies from 12 providers"/>
</dbReference>
<dbReference type="DNASU" id="212933"/>
<dbReference type="Ensembl" id="ENSMUST00000048660.12">
    <property type="protein sequence ID" value="ENSMUSP00000046079.6"/>
    <property type="gene ID" value="ENSMUSG00000042251.13"/>
</dbReference>
<dbReference type="Ensembl" id="ENSMUST00000112393.9">
    <property type="protein sequence ID" value="ENSMUSP00000108012.3"/>
    <property type="gene ID" value="ENSMUSG00000042251.13"/>
</dbReference>
<dbReference type="GeneID" id="212933"/>
<dbReference type="KEGG" id="mmu:212933"/>
<dbReference type="UCSC" id="uc007cnt.2">
    <property type="organism name" value="mouse"/>
</dbReference>
<dbReference type="AGR" id="MGI:2442939"/>
<dbReference type="CTD" id="148811"/>
<dbReference type="MGI" id="MGI:2442939">
    <property type="gene designation" value="Pm20d1"/>
</dbReference>
<dbReference type="VEuPathDB" id="HostDB:ENSMUSG00000042251"/>
<dbReference type="eggNOG" id="KOG2275">
    <property type="taxonomic scope" value="Eukaryota"/>
</dbReference>
<dbReference type="GeneTree" id="ENSGT00940000156659"/>
<dbReference type="HOGENOM" id="CLU_021802_11_1_1"/>
<dbReference type="InParanoid" id="Q8C165"/>
<dbReference type="OMA" id="DWTHHPF"/>
<dbReference type="OrthoDB" id="3064516at2759"/>
<dbReference type="PhylomeDB" id="Q8C165"/>
<dbReference type="TreeFam" id="TF328688"/>
<dbReference type="Reactome" id="R-MMU-9673163">
    <property type="pathway name" value="Oleoyl-phe metabolism"/>
</dbReference>
<dbReference type="UniPathway" id="UPA00092"/>
<dbReference type="UniPathway" id="UPA00199"/>
<dbReference type="BioGRID-ORCS" id="212933">
    <property type="hits" value="2 hits in 79 CRISPR screens"/>
</dbReference>
<dbReference type="PRO" id="PR:Q8C165"/>
<dbReference type="Proteomes" id="UP000000589">
    <property type="component" value="Chromosome 1"/>
</dbReference>
<dbReference type="RNAct" id="Q8C165">
    <property type="molecule type" value="protein"/>
</dbReference>
<dbReference type="Bgee" id="ENSMUSG00000042251">
    <property type="expression patterns" value="Expressed in epithelium of small intestine and 126 other cell types or tissues"/>
</dbReference>
<dbReference type="ExpressionAtlas" id="Q8C165">
    <property type="expression patterns" value="baseline and differential"/>
</dbReference>
<dbReference type="GO" id="GO:0005615">
    <property type="term" value="C:extracellular space"/>
    <property type="evidence" value="ECO:0000314"/>
    <property type="project" value="UniProtKB"/>
</dbReference>
<dbReference type="GO" id="GO:0004046">
    <property type="term" value="F:aminoacylase activity"/>
    <property type="evidence" value="ECO:0007669"/>
    <property type="project" value="UniProtKB-EC"/>
</dbReference>
<dbReference type="GO" id="GO:0016811">
    <property type="term" value="F:hydrolase activity, acting on carbon-nitrogen (but not peptide) bonds, in linear amides"/>
    <property type="evidence" value="ECO:0000314"/>
    <property type="project" value="UniProtKB"/>
</dbReference>
<dbReference type="GO" id="GO:0016829">
    <property type="term" value="F:lyase activity"/>
    <property type="evidence" value="ECO:0007669"/>
    <property type="project" value="UniProtKB-KW"/>
</dbReference>
<dbReference type="GO" id="GO:0046872">
    <property type="term" value="F:metal ion binding"/>
    <property type="evidence" value="ECO:0007669"/>
    <property type="project" value="UniProtKB-KW"/>
</dbReference>
<dbReference type="GO" id="GO:0008233">
    <property type="term" value="F:peptidase activity"/>
    <property type="evidence" value="ECO:0007669"/>
    <property type="project" value="UniProtKB-KW"/>
</dbReference>
<dbReference type="GO" id="GO:1990845">
    <property type="term" value="P:adaptive thermogenesis"/>
    <property type="evidence" value="ECO:0000315"/>
    <property type="project" value="UniProtKB"/>
</dbReference>
<dbReference type="GO" id="GO:0043604">
    <property type="term" value="P:amide biosynthetic process"/>
    <property type="evidence" value="ECO:0000314"/>
    <property type="project" value="UniProtKB"/>
</dbReference>
<dbReference type="GO" id="GO:0043605">
    <property type="term" value="P:amide catabolic process"/>
    <property type="evidence" value="ECO:0000314"/>
    <property type="project" value="UniProtKB"/>
</dbReference>
<dbReference type="GO" id="GO:0006520">
    <property type="term" value="P:amino acid metabolic process"/>
    <property type="evidence" value="ECO:0000314"/>
    <property type="project" value="UniProtKB"/>
</dbReference>
<dbReference type="GO" id="GO:0097009">
    <property type="term" value="P:energy homeostasis"/>
    <property type="evidence" value="ECO:0000315"/>
    <property type="project" value="UniProtKB"/>
</dbReference>
<dbReference type="GO" id="GO:0006631">
    <property type="term" value="P:fatty acid metabolic process"/>
    <property type="evidence" value="ECO:0007669"/>
    <property type="project" value="UniProtKB-UniPathway"/>
</dbReference>
<dbReference type="GO" id="GO:0006629">
    <property type="term" value="P:lipid metabolic process"/>
    <property type="evidence" value="ECO:0000314"/>
    <property type="project" value="UniProtKB"/>
</dbReference>
<dbReference type="GO" id="GO:0006508">
    <property type="term" value="P:proteolysis"/>
    <property type="evidence" value="ECO:0007669"/>
    <property type="project" value="UniProtKB-KW"/>
</dbReference>
<dbReference type="GO" id="GO:0022904">
    <property type="term" value="P:respiratory electron transport chain"/>
    <property type="evidence" value="ECO:0007669"/>
    <property type="project" value="UniProtKB-UniPathway"/>
</dbReference>
<dbReference type="CDD" id="cd05674">
    <property type="entry name" value="M20_yscS"/>
    <property type="match status" value="1"/>
</dbReference>
<dbReference type="FunFam" id="1.10.150.900:FF:000003">
    <property type="entry name" value="N-fatty-acyl-amino acid synthase/hydrolase PM20D1"/>
    <property type="match status" value="1"/>
</dbReference>
<dbReference type="FunFam" id="3.40.630.10:FF:000027">
    <property type="entry name" value="N-fatty-acyl-amino acid synthase/hydrolase PM20D1"/>
    <property type="match status" value="1"/>
</dbReference>
<dbReference type="Gene3D" id="1.10.150.900">
    <property type="match status" value="1"/>
</dbReference>
<dbReference type="Gene3D" id="3.30.70.360">
    <property type="match status" value="1"/>
</dbReference>
<dbReference type="Gene3D" id="3.40.630.10">
    <property type="entry name" value="Zn peptidases"/>
    <property type="match status" value="1"/>
</dbReference>
<dbReference type="InterPro" id="IPR036264">
    <property type="entry name" value="Bact_exopeptidase_dim_dom"/>
</dbReference>
<dbReference type="InterPro" id="IPR047177">
    <property type="entry name" value="Pept_M20A"/>
</dbReference>
<dbReference type="InterPro" id="IPR002933">
    <property type="entry name" value="Peptidase_M20"/>
</dbReference>
<dbReference type="InterPro" id="IPR011650">
    <property type="entry name" value="Peptidase_M20_dimer"/>
</dbReference>
<dbReference type="PANTHER" id="PTHR45962">
    <property type="entry name" value="N-FATTY-ACYL-AMINO ACID SYNTHASE/HYDROLASE PM20D1"/>
    <property type="match status" value="1"/>
</dbReference>
<dbReference type="PANTHER" id="PTHR45962:SF1">
    <property type="entry name" value="N-FATTY-ACYL-AMINO ACID SYNTHASE_HYDROLASE PM20D1"/>
    <property type="match status" value="1"/>
</dbReference>
<dbReference type="Pfam" id="PF07687">
    <property type="entry name" value="M20_dimer"/>
    <property type="match status" value="1"/>
</dbReference>
<dbReference type="Pfam" id="PF01546">
    <property type="entry name" value="Peptidase_M20"/>
    <property type="match status" value="1"/>
</dbReference>
<dbReference type="SUPFAM" id="SSF55031">
    <property type="entry name" value="Bacterial exopeptidase dimerisation domain"/>
    <property type="match status" value="1"/>
</dbReference>
<dbReference type="SUPFAM" id="SSF53187">
    <property type="entry name" value="Zn-dependent exopeptidases"/>
    <property type="match status" value="1"/>
</dbReference>
<comment type="function">
    <text evidence="3 4 5 7 8 13">Secreted enzyme that regulates the endogenous N-fatty acyl amino acid (NAAs) tissue and circulating levels by functioning as a bidirectional NAA synthase/hydrolase. It condenses free fatty acids and free amino acids to generate NAAs and bidirectionally catalyzes the reverse hydrolysis reaction (Probable) (PubMed:27374330, PubMed:29533650, PubMed:29967167, PubMed:32271712, PubMed:32402239). Some of these NAAs stimulate oxidative metabolism via mitochondrial uncoupling, increasing energy expenditure in a UPC1-independent manner. Thereby, this secreted protein may indirectly regulate whole body energy expenditure (PubMed:27374330, PubMed:29967167, PubMed:32271712). PM20D1 circulates in tight association with both low- and high-density (LDL and HDL,respectively) lipoprotein particles (PubMed:32402239).</text>
</comment>
<comment type="catalytic activity">
    <reaction evidence="3 5 7 8">
        <text>an N-acyl-L-amino acid + H2O = an L-alpha-amino acid + a carboxylate</text>
        <dbReference type="Rhea" id="RHEA:15565"/>
        <dbReference type="ChEBI" id="CHEBI:15377"/>
        <dbReference type="ChEBI" id="CHEBI:29067"/>
        <dbReference type="ChEBI" id="CHEBI:59869"/>
        <dbReference type="ChEBI" id="CHEBI:59874"/>
        <dbReference type="EC" id="3.5.1.14"/>
    </reaction>
    <physiologicalReaction direction="left-to-right" evidence="3 5 7 8">
        <dbReference type="Rhea" id="RHEA:15566"/>
    </physiologicalReaction>
    <physiologicalReaction direction="right-to-left" evidence="3 7">
        <dbReference type="Rhea" id="RHEA:15567"/>
    </physiologicalReaction>
</comment>
<comment type="catalytic activity">
    <reaction evidence="3 4 5 7 8">
        <text>an N-acyl-aromatic L-alpha-amino acid + H2O = an aromatic L-alpha-amino acid + a carboxylate</text>
        <dbReference type="Rhea" id="RHEA:54184"/>
        <dbReference type="ChEBI" id="CHEBI:15377"/>
        <dbReference type="ChEBI" id="CHEBI:29067"/>
        <dbReference type="ChEBI" id="CHEBI:84824"/>
        <dbReference type="ChEBI" id="CHEBI:138093"/>
        <dbReference type="EC" id="3.5.1.114"/>
    </reaction>
    <physiologicalReaction direction="left-to-right" evidence="3 4 5 7">
        <dbReference type="Rhea" id="RHEA:54185"/>
    </physiologicalReaction>
    <physiologicalReaction direction="right-to-left" evidence="3 5 7 8">
        <dbReference type="Rhea" id="RHEA:54186"/>
    </physiologicalReaction>
</comment>
<comment type="catalytic activity">
    <reaction evidence="5 7 8">
        <text>N-(5Z,8Z,11Z,14Z)-eicosatetraenoyl-glycine + H2O = (5Z,8Z,11Z,14Z)-eicosatetraenoate + glycine</text>
        <dbReference type="Rhea" id="RHEA:64108"/>
        <dbReference type="ChEBI" id="CHEBI:15377"/>
        <dbReference type="ChEBI" id="CHEBI:32395"/>
        <dbReference type="ChEBI" id="CHEBI:57305"/>
        <dbReference type="ChEBI" id="CHEBI:59002"/>
    </reaction>
    <physiologicalReaction direction="left-to-right" evidence="5 7 8">
        <dbReference type="Rhea" id="RHEA:64109"/>
    </physiologicalReaction>
    <physiologicalReaction direction="right-to-left" evidence="7">
        <dbReference type="Rhea" id="RHEA:64110"/>
    </physiologicalReaction>
</comment>
<comment type="catalytic activity">
    <reaction evidence="7">
        <text>N-hexadecanoyl-L-phenylalanine + H2O = hexadecanoate + L-phenylalanine</text>
        <dbReference type="Rhea" id="RHEA:64124"/>
        <dbReference type="ChEBI" id="CHEBI:7896"/>
        <dbReference type="ChEBI" id="CHEBI:15377"/>
        <dbReference type="ChEBI" id="CHEBI:58095"/>
        <dbReference type="ChEBI" id="CHEBI:149699"/>
    </reaction>
    <physiologicalReaction direction="left-to-right" evidence="7">
        <dbReference type="Rhea" id="RHEA:64125"/>
    </physiologicalReaction>
</comment>
<comment type="catalytic activity">
    <reaction evidence="7">
        <text>N-octadecanoyl-L-phenylalanine + H2O = octadecanoate + L-phenylalanine</text>
        <dbReference type="Rhea" id="RHEA:64128"/>
        <dbReference type="ChEBI" id="CHEBI:15377"/>
        <dbReference type="ChEBI" id="CHEBI:25629"/>
        <dbReference type="ChEBI" id="CHEBI:58095"/>
        <dbReference type="ChEBI" id="CHEBI:149700"/>
    </reaction>
    <physiologicalReaction direction="left-to-right" evidence="7">
        <dbReference type="Rhea" id="RHEA:64129"/>
    </physiologicalReaction>
</comment>
<comment type="catalytic activity">
    <reaction evidence="7">
        <text>N-(4Z,7Z,10Z,13Z,16Z,19Z-docosahexaenoyl)-L-phenylalanine + H2O = (4Z,7Z,10Z,13Z,16Z,19Z)-docosahexaenoate + L-phenylalanine</text>
        <dbReference type="Rhea" id="RHEA:64132"/>
        <dbReference type="ChEBI" id="CHEBI:15377"/>
        <dbReference type="ChEBI" id="CHEBI:58095"/>
        <dbReference type="ChEBI" id="CHEBI:77016"/>
        <dbReference type="ChEBI" id="CHEBI:149701"/>
    </reaction>
    <physiologicalReaction direction="left-to-right" evidence="7">
        <dbReference type="Rhea" id="RHEA:64133"/>
    </physiologicalReaction>
</comment>
<comment type="catalytic activity">
    <reaction evidence="7">
        <text>N-(9Z-octadecenoyl)-L-asparagine + H2O = L-asparagine + (9Z)-octadecenoate</text>
        <dbReference type="Rhea" id="RHEA:64136"/>
        <dbReference type="ChEBI" id="CHEBI:15377"/>
        <dbReference type="ChEBI" id="CHEBI:30823"/>
        <dbReference type="ChEBI" id="CHEBI:58048"/>
        <dbReference type="ChEBI" id="CHEBI:149730"/>
    </reaction>
    <physiologicalReaction direction="left-to-right" evidence="7">
        <dbReference type="Rhea" id="RHEA:64137"/>
    </physiologicalReaction>
</comment>
<comment type="catalytic activity">
    <reaction evidence="3 7">
        <text>(9Z)-octadecenoate + glycine = N-(9Z-octadecenoyl)glycine + H2O</text>
        <dbReference type="Rhea" id="RHEA:51316"/>
        <dbReference type="ChEBI" id="CHEBI:15377"/>
        <dbReference type="ChEBI" id="CHEBI:30823"/>
        <dbReference type="ChEBI" id="CHEBI:57305"/>
        <dbReference type="ChEBI" id="CHEBI:133992"/>
    </reaction>
    <physiologicalReaction direction="right-to-left" evidence="3 7">
        <dbReference type="Rhea" id="RHEA:51318"/>
    </physiologicalReaction>
</comment>
<comment type="catalytic activity">
    <reaction evidence="7">
        <text>N-(9Z-octadecenoyl)-L-lysine + H2O = L-lysine + (9Z)-octadecenoate</text>
        <dbReference type="Rhea" id="RHEA:64192"/>
        <dbReference type="ChEBI" id="CHEBI:15377"/>
        <dbReference type="ChEBI" id="CHEBI:30823"/>
        <dbReference type="ChEBI" id="CHEBI:32551"/>
        <dbReference type="ChEBI" id="CHEBI:149731"/>
    </reaction>
    <physiologicalReaction direction="left-to-right" evidence="7">
        <dbReference type="Rhea" id="RHEA:64193"/>
    </physiologicalReaction>
</comment>
<comment type="catalytic activity">
    <reaction evidence="7">
        <text>N-(9Z-octadecenoyl)-L-methionine + H2O = (9Z)-octadecenoate + L-methionine</text>
        <dbReference type="Rhea" id="RHEA:64144"/>
        <dbReference type="ChEBI" id="CHEBI:15377"/>
        <dbReference type="ChEBI" id="CHEBI:30823"/>
        <dbReference type="ChEBI" id="CHEBI:57844"/>
        <dbReference type="ChEBI" id="CHEBI:149732"/>
    </reaction>
    <physiologicalReaction direction="left-to-right" evidence="7">
        <dbReference type="Rhea" id="RHEA:64145"/>
    </physiologicalReaction>
</comment>
<comment type="catalytic activity">
    <reaction evidence="3 7">
        <text>N-(9Z-octadecenoyl)-L-serine + H2O = L-serine + (9Z)-octadecenoate</text>
        <dbReference type="Rhea" id="RHEA:51352"/>
        <dbReference type="ChEBI" id="CHEBI:15377"/>
        <dbReference type="ChEBI" id="CHEBI:30823"/>
        <dbReference type="ChEBI" id="CHEBI:33384"/>
        <dbReference type="ChEBI" id="CHEBI:134031"/>
    </reaction>
    <physiologicalReaction direction="left-to-right" evidence="3 7">
        <dbReference type="Rhea" id="RHEA:51353"/>
    </physiologicalReaction>
</comment>
<comment type="catalytic activity">
    <reaction evidence="7">
        <text>N-(9Z-octadecenoyl)-L-tryptophan + H2O = L-tryptophan + (9Z)-octadecenoate</text>
        <dbReference type="Rhea" id="RHEA:64176"/>
        <dbReference type="ChEBI" id="CHEBI:15377"/>
        <dbReference type="ChEBI" id="CHEBI:30823"/>
        <dbReference type="ChEBI" id="CHEBI:57912"/>
        <dbReference type="ChEBI" id="CHEBI:149733"/>
    </reaction>
    <physiologicalReaction direction="left-to-right" evidence="7">
        <dbReference type="Rhea" id="RHEA:64177"/>
    </physiologicalReaction>
</comment>
<comment type="catalytic activity">
    <reaction evidence="7">
        <text>N-(9Z-octadecenoyl)-L-tyrosine + H2O = L-tyrosine + (9Z)-octadecenoate</text>
        <dbReference type="Rhea" id="RHEA:64184"/>
        <dbReference type="ChEBI" id="CHEBI:15377"/>
        <dbReference type="ChEBI" id="CHEBI:30823"/>
        <dbReference type="ChEBI" id="CHEBI:58315"/>
        <dbReference type="ChEBI" id="CHEBI:149734"/>
    </reaction>
    <physiologicalReaction direction="left-to-right" evidence="7">
        <dbReference type="Rhea" id="RHEA:64185"/>
    </physiologicalReaction>
</comment>
<comment type="catalytic activity">
    <reaction evidence="3 7">
        <text>N-(9Z-octadecenoyl)-L-glutamine + H2O = L-glutamine + (9Z)-octadecenoate</text>
        <dbReference type="Rhea" id="RHEA:51356"/>
        <dbReference type="ChEBI" id="CHEBI:15377"/>
        <dbReference type="ChEBI" id="CHEBI:30823"/>
        <dbReference type="ChEBI" id="CHEBI:58359"/>
        <dbReference type="ChEBI" id="CHEBI:134033"/>
    </reaction>
    <physiologicalReaction direction="left-to-right" evidence="3 7">
        <dbReference type="Rhea" id="RHEA:51357"/>
    </physiologicalReaction>
</comment>
<comment type="catalytic activity">
    <reaction evidence="7">
        <text>N-(5Z,8Z,11Z,14Z-eicosatetraenoyl)-L-serine + H2O = (5Z,8Z,11Z,14Z)-eicosatetraenoate + L-serine</text>
        <dbReference type="Rhea" id="RHEA:64116"/>
        <dbReference type="ChEBI" id="CHEBI:15377"/>
        <dbReference type="ChEBI" id="CHEBI:32395"/>
        <dbReference type="ChEBI" id="CHEBI:33384"/>
        <dbReference type="ChEBI" id="CHEBI:149697"/>
    </reaction>
    <physiologicalReaction direction="left-to-right" evidence="7">
        <dbReference type="Rhea" id="RHEA:64117"/>
    </physiologicalReaction>
    <physiologicalReaction direction="right-to-left" evidence="7">
        <dbReference type="Rhea" id="RHEA:64118"/>
    </physiologicalReaction>
</comment>
<comment type="catalytic activity">
    <reaction evidence="7">
        <text>(5Z,8Z,11Z,14Z)-eicosatetraenoate + L-phenylalanine = N-(5Z,8Z,11Z,14Z-eicosatetraenoyl)-L-phenylalanine + H2O</text>
        <dbReference type="Rhea" id="RHEA:51312"/>
        <dbReference type="ChEBI" id="CHEBI:15377"/>
        <dbReference type="ChEBI" id="CHEBI:32395"/>
        <dbReference type="ChEBI" id="CHEBI:58095"/>
        <dbReference type="ChEBI" id="CHEBI:134022"/>
    </reaction>
    <physiologicalReaction direction="left-to-right" evidence="7">
        <dbReference type="Rhea" id="RHEA:51313"/>
    </physiologicalReaction>
    <physiologicalReaction direction="right-to-left" evidence="7">
        <dbReference type="Rhea" id="RHEA:51314"/>
    </physiologicalReaction>
</comment>
<comment type="catalytic activity">
    <reaction evidence="3">
        <text>N-(9Z-octadecenoyl)-L-leucine + H2O = L-leucine + (9Z)-octadecenoate</text>
        <dbReference type="Rhea" id="RHEA:51360"/>
        <dbReference type="ChEBI" id="CHEBI:15377"/>
        <dbReference type="ChEBI" id="CHEBI:30823"/>
        <dbReference type="ChEBI" id="CHEBI:57427"/>
        <dbReference type="ChEBI" id="CHEBI:134035"/>
    </reaction>
    <physiologicalReaction direction="left-to-right" evidence="3">
        <dbReference type="Rhea" id="RHEA:51361"/>
    </physiologicalReaction>
    <physiologicalReaction direction="right-to-left" evidence="3">
        <dbReference type="Rhea" id="RHEA:51362"/>
    </physiologicalReaction>
</comment>
<comment type="catalytic activity">
    <reaction evidence="3 4 5 8">
        <text>L-phenylalanine + (9Z)-octadecenoate = N-(9Z-octadecenoyl)-L-phenylalanine + H2O</text>
        <dbReference type="Rhea" id="RHEA:51300"/>
        <dbReference type="ChEBI" id="CHEBI:15377"/>
        <dbReference type="ChEBI" id="CHEBI:30823"/>
        <dbReference type="ChEBI" id="CHEBI:58095"/>
        <dbReference type="ChEBI" id="CHEBI:134020"/>
    </reaction>
    <physiologicalReaction direction="left-to-right" evidence="3 5 8">
        <dbReference type="Rhea" id="RHEA:51301"/>
    </physiologicalReaction>
    <physiologicalReaction direction="right-to-left" evidence="3 4 5">
        <dbReference type="Rhea" id="RHEA:51302"/>
    </physiologicalReaction>
</comment>
<comment type="cofactor">
    <cofactor evidence="1">
        <name>Zn(2+)</name>
        <dbReference type="ChEBI" id="CHEBI:29105"/>
    </cofactor>
    <text evidence="1">Binds 2 Zn(2+) ions per subunit.</text>
</comment>
<comment type="activity regulation">
    <text evidence="8">Lipoproteins are powerful coactivators of PM20D1 activity in vitro and NAA biosynthesis in vivo.</text>
</comment>
<comment type="pathway">
    <text evidence="3 5 7 8">Amino-acid metabolism.</text>
</comment>
<comment type="pathway">
    <text evidence="3 5 7">Energy metabolism; electron transfer.</text>
</comment>
<comment type="pathway">
    <text evidence="3 5 7 8">Lipid metabolism; fatty acid metabolism.</text>
</comment>
<comment type="subcellular location">
    <subcellularLocation>
        <location evidence="3 7 8">Secreted</location>
    </subcellularLocation>
</comment>
<comment type="tissue specificity">
    <text evidence="3 5">In addition to being detected in blood (at protein level), PM20D1 is also highly expressed in other tissues including brown adipocytes, liver and kidney (PubMed:27374330, PubMed:29967167). It is also expressed in small intestine, large intestine, heart and pancreas (PubMed:29967167).</text>
</comment>
<comment type="induction">
    <text evidence="3 6">Up-regulated in adipose tissue upon cold exposure.</text>
</comment>
<comment type="disruption phenotype">
    <text evidence="5 7">Genetic ablation causes tissue-specific bidirectional dysregulation of several N-acyl amino acids (PubMed:29967167, PubMed:32271712). Locomotor activity and resting energy requirements (RER) are slightly increased and decreased, respectively, in PM20D1-KO mice on chow diet, while diet-induced obesity conditions produce a marked impairment in glucose homeostasis and insulin sensitivity in these mice. They also exhibit enhanced defense of body temperature in cold, and antinociceptive behaviors selectively in response to chemical and inflammatory pain stimuli while maintaining normal thermal pain sensation and normal movement (PubMed:29967167).</text>
</comment>
<comment type="miscellaneous">
    <text evidence="3 8">Overexpression in mice blunts high fat diet-induced increase in fat mass and associated weight gain (PubMed:27374330). Free NAAs represent the biologically active form of these circulating molecules, and the circulating NAAs bioactivity is determined by plasma protein binding (PubMed:32402239).</text>
</comment>
<comment type="similarity">
    <text evidence="11">Belongs to the peptidase M20A family.</text>
</comment>
<organism>
    <name type="scientific">Mus musculus</name>
    <name type="common">Mouse</name>
    <dbReference type="NCBI Taxonomy" id="10090"/>
    <lineage>
        <taxon>Eukaryota</taxon>
        <taxon>Metazoa</taxon>
        <taxon>Chordata</taxon>
        <taxon>Craniata</taxon>
        <taxon>Vertebrata</taxon>
        <taxon>Euteleostomi</taxon>
        <taxon>Mammalia</taxon>
        <taxon>Eutheria</taxon>
        <taxon>Euarchontoglires</taxon>
        <taxon>Glires</taxon>
        <taxon>Rodentia</taxon>
        <taxon>Myomorpha</taxon>
        <taxon>Muroidea</taxon>
        <taxon>Muridae</taxon>
        <taxon>Murinae</taxon>
        <taxon>Mus</taxon>
        <taxon>Mus</taxon>
    </lineage>
</organism>
<feature type="signal peptide" evidence="2">
    <location>
        <begin position="1"/>
        <end position="24"/>
    </location>
</feature>
<feature type="chain" id="PRO_0000321929" description="N-fatty-acyl-amino acid synthase/hydrolase PM20D1">
    <location>
        <begin position="25"/>
        <end position="503"/>
    </location>
</feature>
<feature type="active site" evidence="1">
    <location>
        <position position="127"/>
    </location>
</feature>
<feature type="active site" description="Proton acceptor" evidence="1">
    <location>
        <position position="191"/>
    </location>
</feature>
<feature type="binding site" evidence="1">
    <location>
        <position position="125"/>
    </location>
    <ligand>
        <name>Zn(2+)</name>
        <dbReference type="ChEBI" id="CHEBI:29105"/>
        <label>2</label>
    </ligand>
</feature>
<feature type="binding site" evidence="1">
    <location>
        <position position="157"/>
    </location>
    <ligand>
        <name>Zn(2+)</name>
        <dbReference type="ChEBI" id="CHEBI:29105"/>
        <label>1</label>
    </ligand>
</feature>
<feature type="binding site" evidence="1">
    <location>
        <position position="157"/>
    </location>
    <ligand>
        <name>Zn(2+)</name>
        <dbReference type="ChEBI" id="CHEBI:29105"/>
        <label>2</label>
    </ligand>
</feature>
<feature type="binding site" evidence="1">
    <location>
        <position position="192"/>
    </location>
    <ligand>
        <name>Zn(2+)</name>
        <dbReference type="ChEBI" id="CHEBI:29105"/>
        <label>1</label>
    </ligand>
</feature>
<feature type="binding site" evidence="1">
    <location>
        <position position="218"/>
    </location>
    <ligand>
        <name>Zn(2+)</name>
        <dbReference type="ChEBI" id="CHEBI:29105"/>
        <label>2</label>
    </ligand>
</feature>
<feature type="binding site" evidence="1">
    <location>
        <position position="465"/>
    </location>
    <ligand>
        <name>Zn(2+)</name>
        <dbReference type="ChEBI" id="CHEBI:29105"/>
        <label>1</label>
    </ligand>
</feature>
<feature type="glycosylation site" description="N-linked (GlcNAc...) asparagine" evidence="2">
    <location>
        <position position="72"/>
    </location>
</feature>
<feature type="glycosylation site" description="N-linked (GlcNAc...) asparagine" evidence="2">
    <location>
        <position position="443"/>
    </location>
</feature>
<feature type="mutagenesis site" description="Loss of N-fatty-acyl-amino acid synthase/hydrolase activity." evidence="3">
    <original>H</original>
    <variation>A</variation>
    <location>
        <position position="125"/>
    </location>
</feature>
<feature type="mutagenesis site" description="Loss of N-fatty-acyl-amino acid synthase/hydrolase activity." evidence="3">
    <original>D</original>
    <variation>A</variation>
    <location>
        <position position="127"/>
    </location>
</feature>
<feature type="mutagenesis site" description="Loss of N-fatty-acyl-amino acid synthase/hydrolase activity." evidence="3">
    <original>H</original>
    <variation>A</variation>
    <location>
        <position position="465"/>
    </location>
</feature>
<feature type="sequence conflict" description="In Ref. 2; BAE25627." evidence="11" ref="2">
    <original>E</original>
    <variation>G</variation>
    <location>
        <position position="373"/>
    </location>
</feature>
<accession>Q8C165</accession>
<accession>Q3UNX0</accession>
<accession>Q8R117</accession>
<proteinExistence type="evidence at protein level"/>
<gene>
    <name evidence="14" type="primary">Pm20d1</name>
</gene>